<name>AATE_METTP</name>
<sequence length="182" mass="20415">MALDAVVEDILATSKSKVAEINAETEQEVARILSEARERAAEIKSRKEAEAKHDIEALVRREMSSANLELKRAELNVHKEVLEQVRIKFLDAVTNLPKDKNEALIKKLLEPYDLKDMKVYSSKRDQAFVSSLVPNYGGTLDIIGGVVVESKDGSVRFDHSYETLARDIFNAKVKEVSKLLFG</sequence>
<evidence type="ECO:0000255" key="1">
    <source>
        <dbReference type="HAMAP-Rule" id="MF_00311"/>
    </source>
</evidence>
<dbReference type="EMBL" id="CP000477">
    <property type="protein sequence ID" value="ABK15379.1"/>
    <property type="molecule type" value="Genomic_DNA"/>
</dbReference>
<dbReference type="RefSeq" id="WP_011696757.1">
    <property type="nucleotide sequence ID" value="NC_008553.1"/>
</dbReference>
<dbReference type="SMR" id="A0B9K5"/>
<dbReference type="STRING" id="349307.Mthe_1612"/>
<dbReference type="GeneID" id="4462043"/>
<dbReference type="KEGG" id="mtp:Mthe_1612"/>
<dbReference type="HOGENOM" id="CLU_120786_0_0_2"/>
<dbReference type="OrthoDB" id="4691at2157"/>
<dbReference type="Proteomes" id="UP000000674">
    <property type="component" value="Chromosome"/>
</dbReference>
<dbReference type="GO" id="GO:0005886">
    <property type="term" value="C:plasma membrane"/>
    <property type="evidence" value="ECO:0007669"/>
    <property type="project" value="UniProtKB-SubCell"/>
</dbReference>
<dbReference type="GO" id="GO:0033178">
    <property type="term" value="C:proton-transporting two-sector ATPase complex, catalytic domain"/>
    <property type="evidence" value="ECO:0007669"/>
    <property type="project" value="InterPro"/>
</dbReference>
<dbReference type="GO" id="GO:0005524">
    <property type="term" value="F:ATP binding"/>
    <property type="evidence" value="ECO:0007669"/>
    <property type="project" value="UniProtKB-UniRule"/>
</dbReference>
<dbReference type="GO" id="GO:0046933">
    <property type="term" value="F:proton-transporting ATP synthase activity, rotational mechanism"/>
    <property type="evidence" value="ECO:0007669"/>
    <property type="project" value="UniProtKB-UniRule"/>
</dbReference>
<dbReference type="GO" id="GO:0046961">
    <property type="term" value="F:proton-transporting ATPase activity, rotational mechanism"/>
    <property type="evidence" value="ECO:0007669"/>
    <property type="project" value="InterPro"/>
</dbReference>
<dbReference type="GO" id="GO:0042777">
    <property type="term" value="P:proton motive force-driven plasma membrane ATP synthesis"/>
    <property type="evidence" value="ECO:0007669"/>
    <property type="project" value="UniProtKB-UniRule"/>
</dbReference>
<dbReference type="Gene3D" id="1.20.5.620">
    <property type="entry name" value="F1F0 ATP synthase subunit B, membrane domain"/>
    <property type="match status" value="1"/>
</dbReference>
<dbReference type="HAMAP" id="MF_00311">
    <property type="entry name" value="ATP_synth_E_arch"/>
    <property type="match status" value="1"/>
</dbReference>
<dbReference type="InterPro" id="IPR002842">
    <property type="entry name" value="ATPase_V1_Esu"/>
</dbReference>
<dbReference type="NCBIfam" id="NF002629">
    <property type="entry name" value="PRK02292.1"/>
    <property type="match status" value="1"/>
</dbReference>
<dbReference type="Pfam" id="PF01991">
    <property type="entry name" value="vATP-synt_E"/>
    <property type="match status" value="1"/>
</dbReference>
<dbReference type="SUPFAM" id="SSF160527">
    <property type="entry name" value="V-type ATPase subunit E-like"/>
    <property type="match status" value="1"/>
</dbReference>
<feature type="chain" id="PRO_0000322531" description="A-type ATP synthase subunit E">
    <location>
        <begin position="1"/>
        <end position="182"/>
    </location>
</feature>
<gene>
    <name evidence="1" type="primary">atpE</name>
    <name type="ordered locus">Mthe_1612</name>
</gene>
<protein>
    <recommendedName>
        <fullName evidence="1">A-type ATP synthase subunit E</fullName>
    </recommendedName>
</protein>
<organism>
    <name type="scientific">Methanothrix thermoacetophila (strain DSM 6194 / JCM 14653 / NBRC 101360 / PT)</name>
    <name type="common">Methanosaeta thermophila</name>
    <dbReference type="NCBI Taxonomy" id="349307"/>
    <lineage>
        <taxon>Archaea</taxon>
        <taxon>Methanobacteriati</taxon>
        <taxon>Methanobacteriota</taxon>
        <taxon>Stenosarchaea group</taxon>
        <taxon>Methanomicrobia</taxon>
        <taxon>Methanotrichales</taxon>
        <taxon>Methanotrichaceae</taxon>
        <taxon>Methanothrix</taxon>
    </lineage>
</organism>
<keyword id="KW-0066">ATP synthesis</keyword>
<keyword id="KW-1003">Cell membrane</keyword>
<keyword id="KW-0375">Hydrogen ion transport</keyword>
<keyword id="KW-0406">Ion transport</keyword>
<keyword id="KW-0472">Membrane</keyword>
<keyword id="KW-1185">Reference proteome</keyword>
<keyword id="KW-0813">Transport</keyword>
<accession>A0B9K5</accession>
<comment type="function">
    <text evidence="1">Component of the A-type ATP synthase that produces ATP from ADP in the presence of a proton gradient across the membrane.</text>
</comment>
<comment type="subunit">
    <text evidence="1">Has multiple subunits with at least A(3), B(3), C, D, E, F, H, I and proteolipid K(x).</text>
</comment>
<comment type="subcellular location">
    <subcellularLocation>
        <location evidence="1">Cell membrane</location>
        <topology evidence="1">Peripheral membrane protein</topology>
    </subcellularLocation>
</comment>
<comment type="similarity">
    <text evidence="1">Belongs to the V-ATPase E subunit family.</text>
</comment>
<proteinExistence type="inferred from homology"/>
<reference key="1">
    <citation type="submission" date="2006-10" db="EMBL/GenBank/DDBJ databases">
        <title>Complete sequence of Methanosaeta thermophila PT.</title>
        <authorList>
            <consortium name="US DOE Joint Genome Institute"/>
            <person name="Copeland A."/>
            <person name="Lucas S."/>
            <person name="Lapidus A."/>
            <person name="Barry K."/>
            <person name="Detter J.C."/>
            <person name="Glavina del Rio T."/>
            <person name="Hammon N."/>
            <person name="Israni S."/>
            <person name="Pitluck S."/>
            <person name="Chain P."/>
            <person name="Malfatti S."/>
            <person name="Shin M."/>
            <person name="Vergez L."/>
            <person name="Schmutz J."/>
            <person name="Larimer F."/>
            <person name="Land M."/>
            <person name="Hauser L."/>
            <person name="Kyrpides N."/>
            <person name="Kim E."/>
            <person name="Smith K.S."/>
            <person name="Ingram-Smith C."/>
            <person name="Richardson P."/>
        </authorList>
    </citation>
    <scope>NUCLEOTIDE SEQUENCE [LARGE SCALE GENOMIC DNA]</scope>
    <source>
        <strain>DSM 6194 / JCM 14653 / NBRC 101360 / PT</strain>
    </source>
</reference>